<evidence type="ECO:0000255" key="1">
    <source>
        <dbReference type="HAMAP-Rule" id="MF_03135"/>
    </source>
</evidence>
<evidence type="ECO:0000269" key="2">
    <source>
    </source>
</evidence>
<gene>
    <name type="primary">tsf1</name>
    <name type="ORF">SPBC800.07c</name>
</gene>
<organism>
    <name type="scientific">Schizosaccharomyces pombe (strain 972 / ATCC 24843)</name>
    <name type="common">Fission yeast</name>
    <dbReference type="NCBI Taxonomy" id="284812"/>
    <lineage>
        <taxon>Eukaryota</taxon>
        <taxon>Fungi</taxon>
        <taxon>Dikarya</taxon>
        <taxon>Ascomycota</taxon>
        <taxon>Taphrinomycotina</taxon>
        <taxon>Schizosaccharomycetes</taxon>
        <taxon>Schizosaccharomycetales</taxon>
        <taxon>Schizosaccharomycetaceae</taxon>
        <taxon>Schizosaccharomyces</taxon>
    </lineage>
</organism>
<reference key="1">
    <citation type="journal article" date="2002" name="Nature">
        <title>The genome sequence of Schizosaccharomyces pombe.</title>
        <authorList>
            <person name="Wood V."/>
            <person name="Gwilliam R."/>
            <person name="Rajandream M.A."/>
            <person name="Lyne M.H."/>
            <person name="Lyne R."/>
            <person name="Stewart A."/>
            <person name="Sgouros J.G."/>
            <person name="Peat N."/>
            <person name="Hayles J."/>
            <person name="Baker S.G."/>
            <person name="Basham D."/>
            <person name="Bowman S."/>
            <person name="Brooks K."/>
            <person name="Brown D."/>
            <person name="Brown S."/>
            <person name="Chillingworth T."/>
            <person name="Churcher C.M."/>
            <person name="Collins M."/>
            <person name="Connor R."/>
            <person name="Cronin A."/>
            <person name="Davis P."/>
            <person name="Feltwell T."/>
            <person name="Fraser A."/>
            <person name="Gentles S."/>
            <person name="Goble A."/>
            <person name="Hamlin N."/>
            <person name="Harris D.E."/>
            <person name="Hidalgo J."/>
            <person name="Hodgson G."/>
            <person name="Holroyd S."/>
            <person name="Hornsby T."/>
            <person name="Howarth S."/>
            <person name="Huckle E.J."/>
            <person name="Hunt S."/>
            <person name="Jagels K."/>
            <person name="James K.D."/>
            <person name="Jones L."/>
            <person name="Jones M."/>
            <person name="Leather S."/>
            <person name="McDonald S."/>
            <person name="McLean J."/>
            <person name="Mooney P."/>
            <person name="Moule S."/>
            <person name="Mungall K.L."/>
            <person name="Murphy L.D."/>
            <person name="Niblett D."/>
            <person name="Odell C."/>
            <person name="Oliver K."/>
            <person name="O'Neil S."/>
            <person name="Pearson D."/>
            <person name="Quail M.A."/>
            <person name="Rabbinowitsch E."/>
            <person name="Rutherford K.M."/>
            <person name="Rutter S."/>
            <person name="Saunders D."/>
            <person name="Seeger K."/>
            <person name="Sharp S."/>
            <person name="Skelton J."/>
            <person name="Simmonds M.N."/>
            <person name="Squares R."/>
            <person name="Squares S."/>
            <person name="Stevens K."/>
            <person name="Taylor K."/>
            <person name="Taylor R.G."/>
            <person name="Tivey A."/>
            <person name="Walsh S.V."/>
            <person name="Warren T."/>
            <person name="Whitehead S."/>
            <person name="Woodward J.R."/>
            <person name="Volckaert G."/>
            <person name="Aert R."/>
            <person name="Robben J."/>
            <person name="Grymonprez B."/>
            <person name="Weltjens I."/>
            <person name="Vanstreels E."/>
            <person name="Rieger M."/>
            <person name="Schaefer M."/>
            <person name="Mueller-Auer S."/>
            <person name="Gabel C."/>
            <person name="Fuchs M."/>
            <person name="Duesterhoeft A."/>
            <person name="Fritzc C."/>
            <person name="Holzer E."/>
            <person name="Moestl D."/>
            <person name="Hilbert H."/>
            <person name="Borzym K."/>
            <person name="Langer I."/>
            <person name="Beck A."/>
            <person name="Lehrach H."/>
            <person name="Reinhardt R."/>
            <person name="Pohl T.M."/>
            <person name="Eger P."/>
            <person name="Zimmermann W."/>
            <person name="Wedler H."/>
            <person name="Wambutt R."/>
            <person name="Purnelle B."/>
            <person name="Goffeau A."/>
            <person name="Cadieu E."/>
            <person name="Dreano S."/>
            <person name="Gloux S."/>
            <person name="Lelaure V."/>
            <person name="Mottier S."/>
            <person name="Galibert F."/>
            <person name="Aves S.J."/>
            <person name="Xiang Z."/>
            <person name="Hunt C."/>
            <person name="Moore K."/>
            <person name="Hurst S.M."/>
            <person name="Lucas M."/>
            <person name="Rochet M."/>
            <person name="Gaillardin C."/>
            <person name="Tallada V.A."/>
            <person name="Garzon A."/>
            <person name="Thode G."/>
            <person name="Daga R.R."/>
            <person name="Cruzado L."/>
            <person name="Jimenez J."/>
            <person name="Sanchez M."/>
            <person name="del Rey F."/>
            <person name="Benito J."/>
            <person name="Dominguez A."/>
            <person name="Revuelta J.L."/>
            <person name="Moreno S."/>
            <person name="Armstrong J."/>
            <person name="Forsburg S.L."/>
            <person name="Cerutti L."/>
            <person name="Lowe T."/>
            <person name="McCombie W.R."/>
            <person name="Paulsen I."/>
            <person name="Potashkin J."/>
            <person name="Shpakovski G.V."/>
            <person name="Ussery D."/>
            <person name="Barrell B.G."/>
            <person name="Nurse P."/>
        </authorList>
    </citation>
    <scope>NUCLEOTIDE SEQUENCE [LARGE SCALE GENOMIC DNA]</scope>
    <source>
        <strain>972 / ATCC 24843</strain>
    </source>
</reference>
<reference key="2">
    <citation type="journal article" date="2005" name="Genetics">
        <title>Mitochondrial translation: elongation factor tu is essential in fission yeast and depends on an exchange factor conserved in humans but not in budding yeast.</title>
        <authorList>
            <person name="Chiron S."/>
            <person name="Suleau A."/>
            <person name="Bonnefoy N."/>
        </authorList>
    </citation>
    <scope>FUNCTION</scope>
    <scope>SUBCELLULAR LOCATION</scope>
</reference>
<keyword id="KW-0251">Elongation factor</keyword>
<keyword id="KW-0496">Mitochondrion</keyword>
<keyword id="KW-0648">Protein biosynthesis</keyword>
<keyword id="KW-1185">Reference proteome</keyword>
<keyword id="KW-0809">Transit peptide</keyword>
<sequence>MLFQRRLHFHQFFGKTRVTGSLSRQWYSKLPSKLADIKKLRSETNASMDLVKQSVEEAGVGNLELAREILKKKIVQRGGKLAEKSKNRTAKEGWIIQCISEDGRKAVMAEINCESDFVAQTTPFQDLARRIASTFLHYLPTNHSSYSVEATLKNEILKHQAYVSKNHEANEKDVSSNVSLEEEIVKMTSFTGEKVQVQRLHCMNARVPSTAIGIFSHGAKQSSPLQQLGRIGSMVQINSDLSTRKGLSNQIAKEIVAQDPSSTSELLSFRSLVDSEKTIKDVLGQSTILEWVRWERGGN</sequence>
<feature type="transit peptide" description="Mitochondrion" evidence="1">
    <location>
        <begin position="1"/>
        <end position="18"/>
    </location>
</feature>
<feature type="chain" id="PRO_0000362143" description="Elongation factor Ts, mitochondrial">
    <location>
        <begin position="19"/>
        <end position="299"/>
    </location>
</feature>
<name>EFTS_SCHPO</name>
<accession>Q9HGL5</accession>
<proteinExistence type="inferred from homology"/>
<comment type="function">
    <text evidence="1 2">Associates with the EF-Tu.GDP complex and induces the exchange of GDP to GTP. It remains bound to the aminoacyl-tRNA.EF-Tu.GTP complex up to the GTP hydrolysis stage on the ribosome.</text>
</comment>
<comment type="subcellular location">
    <subcellularLocation>
        <location evidence="1 2">Mitochondrion</location>
    </subcellularLocation>
</comment>
<comment type="similarity">
    <text evidence="1">Belongs to the EF-Ts family.</text>
</comment>
<dbReference type="EMBL" id="CU329671">
    <property type="protein sequence ID" value="CAC01522.1"/>
    <property type="molecule type" value="Genomic_DNA"/>
</dbReference>
<dbReference type="RefSeq" id="NP_595108.1">
    <property type="nucleotide sequence ID" value="NM_001021015.2"/>
</dbReference>
<dbReference type="SMR" id="Q9HGL5"/>
<dbReference type="BioGRID" id="277217">
    <property type="interactions" value="32"/>
</dbReference>
<dbReference type="FunCoup" id="Q9HGL5">
    <property type="interactions" value="308"/>
</dbReference>
<dbReference type="STRING" id="284812.Q9HGL5"/>
<dbReference type="PaxDb" id="4896-SPBC800.07c.1"/>
<dbReference type="EnsemblFungi" id="SPBC800.07c.1">
    <property type="protein sequence ID" value="SPBC800.07c.1:pep"/>
    <property type="gene ID" value="SPBC800.07c"/>
</dbReference>
<dbReference type="GeneID" id="2540692"/>
<dbReference type="KEGG" id="spo:2540692"/>
<dbReference type="PomBase" id="SPBC800.07c">
    <property type="gene designation" value="tsf1"/>
</dbReference>
<dbReference type="VEuPathDB" id="FungiDB:SPBC800.07c"/>
<dbReference type="eggNOG" id="KOG1071">
    <property type="taxonomic scope" value="Eukaryota"/>
</dbReference>
<dbReference type="HOGENOM" id="CLU_940600_0_0_1"/>
<dbReference type="InParanoid" id="Q9HGL5"/>
<dbReference type="OMA" id="QGWISQC"/>
<dbReference type="PhylomeDB" id="Q9HGL5"/>
<dbReference type="PRO" id="PR:Q9HGL5"/>
<dbReference type="Proteomes" id="UP000002485">
    <property type="component" value="Chromosome II"/>
</dbReference>
<dbReference type="GO" id="GO:0005739">
    <property type="term" value="C:mitochondrion"/>
    <property type="evidence" value="ECO:0007669"/>
    <property type="project" value="UniProtKB-SubCell"/>
</dbReference>
<dbReference type="GO" id="GO:0003746">
    <property type="term" value="F:translation elongation factor activity"/>
    <property type="evidence" value="ECO:0000269"/>
    <property type="project" value="PomBase"/>
</dbReference>
<dbReference type="GO" id="GO:0032543">
    <property type="term" value="P:mitochondrial translation"/>
    <property type="evidence" value="ECO:0000269"/>
    <property type="project" value="PomBase"/>
</dbReference>
<dbReference type="GO" id="GO:0070125">
    <property type="term" value="P:mitochondrial translational elongation"/>
    <property type="evidence" value="ECO:0000316"/>
    <property type="project" value="PomBase"/>
</dbReference>
<dbReference type="Gene3D" id="1.10.8.10">
    <property type="entry name" value="DNA helicase RuvA subunit, C-terminal domain"/>
    <property type="match status" value="1"/>
</dbReference>
<dbReference type="Gene3D" id="3.30.479.20">
    <property type="entry name" value="Elongation factor Ts, dimerisation domain"/>
    <property type="match status" value="1"/>
</dbReference>
<dbReference type="HAMAP" id="MF_00050">
    <property type="entry name" value="EF_Ts"/>
    <property type="match status" value="1"/>
</dbReference>
<dbReference type="InterPro" id="IPR036402">
    <property type="entry name" value="EF-Ts_dimer_sf"/>
</dbReference>
<dbReference type="InterPro" id="IPR001816">
    <property type="entry name" value="Transl_elong_EFTs/EF1B"/>
</dbReference>
<dbReference type="InterPro" id="IPR014039">
    <property type="entry name" value="Transl_elong_EFTs/EF1B_dimer"/>
</dbReference>
<dbReference type="PANTHER" id="PTHR11741">
    <property type="entry name" value="ELONGATION FACTOR TS"/>
    <property type="match status" value="1"/>
</dbReference>
<dbReference type="PANTHER" id="PTHR11741:SF0">
    <property type="entry name" value="ELONGATION FACTOR TS, MITOCHONDRIAL"/>
    <property type="match status" value="1"/>
</dbReference>
<dbReference type="Pfam" id="PF00889">
    <property type="entry name" value="EF_TS"/>
    <property type="match status" value="1"/>
</dbReference>
<dbReference type="SUPFAM" id="SSF54713">
    <property type="entry name" value="Elongation factor Ts (EF-Ts), dimerisation domain"/>
    <property type="match status" value="2"/>
</dbReference>
<protein>
    <recommendedName>
        <fullName evidence="1">Elongation factor Ts, mitochondrial</fullName>
        <shortName evidence="1">EF-Ts</shortName>
        <shortName evidence="1">EF-TsMt</shortName>
    </recommendedName>
</protein>